<name>PRP5_GIBZE</name>
<organism>
    <name type="scientific">Gibberella zeae (strain ATCC MYA-4620 / CBS 123657 / FGSC 9075 / NRRL 31084 / PH-1)</name>
    <name type="common">Wheat head blight fungus</name>
    <name type="synonym">Fusarium graminearum</name>
    <dbReference type="NCBI Taxonomy" id="229533"/>
    <lineage>
        <taxon>Eukaryota</taxon>
        <taxon>Fungi</taxon>
        <taxon>Dikarya</taxon>
        <taxon>Ascomycota</taxon>
        <taxon>Pezizomycotina</taxon>
        <taxon>Sordariomycetes</taxon>
        <taxon>Hypocreomycetidae</taxon>
        <taxon>Hypocreales</taxon>
        <taxon>Nectriaceae</taxon>
        <taxon>Fusarium</taxon>
    </lineage>
</organism>
<gene>
    <name type="primary">PRP5</name>
    <name type="ORF">FGRAMPH1_01T02569</name>
    <name type="ORF">FGRRES_01024</name>
    <name type="ORF">FGSG_01024</name>
</gene>
<reference key="1">
    <citation type="journal article" date="2007" name="Science">
        <title>The Fusarium graminearum genome reveals a link between localized polymorphism and pathogen specialization.</title>
        <authorList>
            <person name="Cuomo C.A."/>
            <person name="Gueldener U."/>
            <person name="Xu J.-R."/>
            <person name="Trail F."/>
            <person name="Turgeon B.G."/>
            <person name="Di Pietro A."/>
            <person name="Walton J.D."/>
            <person name="Ma L.-J."/>
            <person name="Baker S.E."/>
            <person name="Rep M."/>
            <person name="Adam G."/>
            <person name="Antoniw J."/>
            <person name="Baldwin T."/>
            <person name="Calvo S.E."/>
            <person name="Chang Y.-L."/>
            <person name="DeCaprio D."/>
            <person name="Gale L.R."/>
            <person name="Gnerre S."/>
            <person name="Goswami R.S."/>
            <person name="Hammond-Kosack K."/>
            <person name="Harris L.J."/>
            <person name="Hilburn K."/>
            <person name="Kennell J.C."/>
            <person name="Kroken S."/>
            <person name="Magnuson J.K."/>
            <person name="Mannhaupt G."/>
            <person name="Mauceli E.W."/>
            <person name="Mewes H.-W."/>
            <person name="Mitterbauer R."/>
            <person name="Muehlbauer G."/>
            <person name="Muensterkoetter M."/>
            <person name="Nelson D."/>
            <person name="O'Donnell K."/>
            <person name="Ouellet T."/>
            <person name="Qi W."/>
            <person name="Quesneville H."/>
            <person name="Roncero M.I.G."/>
            <person name="Seong K.-Y."/>
            <person name="Tetko I.V."/>
            <person name="Urban M."/>
            <person name="Waalwijk C."/>
            <person name="Ward T.J."/>
            <person name="Yao J."/>
            <person name="Birren B.W."/>
            <person name="Kistler H.C."/>
        </authorList>
    </citation>
    <scope>NUCLEOTIDE SEQUENCE [LARGE SCALE GENOMIC DNA]</scope>
    <source>
        <strain>ATCC MYA-4620 / CBS 123657 / FGSC 9075 / NRRL 31084 / PH-1</strain>
    </source>
</reference>
<reference key="2">
    <citation type="journal article" date="2010" name="Nature">
        <title>Comparative genomics reveals mobile pathogenicity chromosomes in Fusarium.</title>
        <authorList>
            <person name="Ma L.-J."/>
            <person name="van der Does H.C."/>
            <person name="Borkovich K.A."/>
            <person name="Coleman J.J."/>
            <person name="Daboussi M.-J."/>
            <person name="Di Pietro A."/>
            <person name="Dufresne M."/>
            <person name="Freitag M."/>
            <person name="Grabherr M."/>
            <person name="Henrissat B."/>
            <person name="Houterman P.M."/>
            <person name="Kang S."/>
            <person name="Shim W.-B."/>
            <person name="Woloshuk C."/>
            <person name="Xie X."/>
            <person name="Xu J.-R."/>
            <person name="Antoniw J."/>
            <person name="Baker S.E."/>
            <person name="Bluhm B.H."/>
            <person name="Breakspear A."/>
            <person name="Brown D.W."/>
            <person name="Butchko R.A.E."/>
            <person name="Chapman S."/>
            <person name="Coulson R."/>
            <person name="Coutinho P.M."/>
            <person name="Danchin E.G.J."/>
            <person name="Diener A."/>
            <person name="Gale L.R."/>
            <person name="Gardiner D.M."/>
            <person name="Goff S."/>
            <person name="Hammond-Kosack K.E."/>
            <person name="Hilburn K."/>
            <person name="Hua-Van A."/>
            <person name="Jonkers W."/>
            <person name="Kazan K."/>
            <person name="Kodira C.D."/>
            <person name="Koehrsen M."/>
            <person name="Kumar L."/>
            <person name="Lee Y.-H."/>
            <person name="Li L."/>
            <person name="Manners J.M."/>
            <person name="Miranda-Saavedra D."/>
            <person name="Mukherjee M."/>
            <person name="Park G."/>
            <person name="Park J."/>
            <person name="Park S.-Y."/>
            <person name="Proctor R.H."/>
            <person name="Regev A."/>
            <person name="Ruiz-Roldan M.C."/>
            <person name="Sain D."/>
            <person name="Sakthikumar S."/>
            <person name="Sykes S."/>
            <person name="Schwartz D.C."/>
            <person name="Turgeon B.G."/>
            <person name="Wapinski I."/>
            <person name="Yoder O."/>
            <person name="Young S."/>
            <person name="Zeng Q."/>
            <person name="Zhou S."/>
            <person name="Galagan J."/>
            <person name="Cuomo C.A."/>
            <person name="Kistler H.C."/>
            <person name="Rep M."/>
        </authorList>
    </citation>
    <scope>GENOME REANNOTATION</scope>
    <source>
        <strain>ATCC MYA-4620 / CBS 123657 / FGSC 9075 / NRRL 31084 / PH-1</strain>
    </source>
</reference>
<reference key="3">
    <citation type="journal article" date="2015" name="BMC Genomics">
        <title>The completed genome sequence of the pathogenic ascomycete fungus Fusarium graminearum.</title>
        <authorList>
            <person name="King R."/>
            <person name="Urban M."/>
            <person name="Hammond-Kosack M.C.U."/>
            <person name="Hassani-Pak K."/>
            <person name="Hammond-Kosack K.E."/>
        </authorList>
    </citation>
    <scope>NUCLEOTIDE SEQUENCE [LARGE SCALE GENOMIC DNA]</scope>
    <source>
        <strain>ATCC MYA-4620 / CBS 123657 / FGSC 9075 / NRRL 31084 / PH-1</strain>
    </source>
</reference>
<sequence>MARPRDSRSPSPAGSTHSSRRFRNDDRRDRDRRNDGRDHRRRTRSRSPDPRNRDRDRDRDRDRARDRDNYRRRDRSLDRRDDNHYRGGRRDNRERDRRRSRDRFDDRIRSPMTDRRRNRSRENDRDVRRRDDSRSRISGRREGTTDSPARSNRDDGRNQKTPLDDSGNGGASQAQTPKAEGGQADVDKKAERLAKLEAWKKKKESASQKQKEVNPSQTRNLLAEMDKKASGASSKTVSPSVSAIASPAATPTVESPAASYSGKFDPKAIAKKSAASRAHDASKPALGSLEGQPEKISVPVKQATTASALPANRTKASGFGFVKTNAETEKLTAKRKLDLDEEDTTKRKLTKLPALPIEADDTPYADQDDDESDGDNFAENEEEAAAAARAAHERRLQAENQMDTAEEETKPTDVETNGDVAMNNNASQPEPATQMEVDEEDDVDPLDAFMADLKQTDVRQPTKTSTTQKIQEPEAYFSDDEYDFNKKDEGDASALLAITAKRKKKDIPTIDYSKIEIEPIRKNFWHEPAELSLLTEAEVADLRLELDGIKVNGKDVPKPVQKWAQCGLTRQTLDVVDNLGYEKPTPIQMQALPALMSGRDVIGVAKTGSGKTVAFLLPMFRHIKDQPPLKDTDGPIGLIMTPTRELAVQIHKDCKPFLKMMGLRAVCAYGGAPIREQIAELKRGAEIIVCTPGRMIDLLAANQGRVTNLKRVTYVVLDEADRMFDMGFEPQVMKIFANMRPDRQTILFSATMPRIIDSLTKKVLKNPIEVTVGGRSVVAKEIEQIVEVRDEPSKFHRVLELLGELYDRDEDARTLIFVERQEKADDLLKELMMKGYPCMSIHGGKDQIDRDSTISDFKKGVVPILIATSVAARGLDVKQLKLVINYDAPNHLEDYVHRAGRTGRAGNTGVAVTFVTPEQENCAPGIAKALEQSGQPIPDRLNEMRKAHREKVKSGKAKDTSGFGGKGLDRLDQEREAARLRERKVHKAEGEEEEVTEDKKEDEDEKAEKALDAIRAAASGVLARESAKADDADAKSMPPVKTSGVVKDKAKDPLDKVSSAVSAINSRLGKAGQLRAGQPIDNKGPDAGAFHATLEINDFPQKARWAVTNRTNVAKILEATGTSITTKGNFYPAGKEVPAGAEPKLYILIEGDTEVVVSSALTELTRLLREGTIAAVDADSRAPASGRYTIT</sequence>
<keyword id="KW-0067">ATP-binding</keyword>
<keyword id="KW-0175">Coiled coil</keyword>
<keyword id="KW-0347">Helicase</keyword>
<keyword id="KW-0378">Hydrolase</keyword>
<keyword id="KW-0507">mRNA processing</keyword>
<keyword id="KW-0508">mRNA splicing</keyword>
<keyword id="KW-0547">Nucleotide-binding</keyword>
<keyword id="KW-0539">Nucleus</keyword>
<keyword id="KW-1185">Reference proteome</keyword>
<comment type="function">
    <text evidence="1">ATP-dependent RNA helicase involved spliceosome assembly and in nuclear splicing. Catalyzes an ATP-dependent conformational change of U2 snRNP. Bridges U1 and U2 snRNPs and enables stable U2 snRNP association with intron RNA (By similarity).</text>
</comment>
<comment type="catalytic activity">
    <reaction>
        <text>ATP + H2O = ADP + phosphate + H(+)</text>
        <dbReference type="Rhea" id="RHEA:13065"/>
        <dbReference type="ChEBI" id="CHEBI:15377"/>
        <dbReference type="ChEBI" id="CHEBI:15378"/>
        <dbReference type="ChEBI" id="CHEBI:30616"/>
        <dbReference type="ChEBI" id="CHEBI:43474"/>
        <dbReference type="ChEBI" id="CHEBI:456216"/>
        <dbReference type="EC" id="3.6.4.13"/>
    </reaction>
</comment>
<comment type="subcellular location">
    <subcellularLocation>
        <location evidence="1">Nucleus</location>
    </subcellularLocation>
</comment>
<comment type="domain">
    <text>The Q motif is unique to and characteristic of the DEAD box family of RNA helicases and controls ATP binding and hydrolysis.</text>
</comment>
<comment type="similarity">
    <text evidence="7">Belongs to the DEAD box helicase family. DDX46/PRP5 subfamily.</text>
</comment>
<protein>
    <recommendedName>
        <fullName>Pre-mRNA-processing ATP-dependent RNA helicase PRP5</fullName>
        <ecNumber>3.6.4.13</ecNumber>
    </recommendedName>
</protein>
<accession>Q4IP34</accession>
<accession>A0A0E0RPB1</accession>
<accession>A0A1C3YHZ1</accession>
<accession>I1RBT4</accession>
<accession>V6QVE8</accession>
<proteinExistence type="inferred from homology"/>
<feature type="chain" id="PRO_0000232364" description="Pre-mRNA-processing ATP-dependent RNA helicase PRP5">
    <location>
        <begin position="1"/>
        <end position="1191"/>
    </location>
</feature>
<feature type="domain" description="Helicase ATP-binding" evidence="3">
    <location>
        <begin position="592"/>
        <end position="770"/>
    </location>
</feature>
<feature type="domain" description="Helicase C-terminal" evidence="4">
    <location>
        <begin position="801"/>
        <end position="945"/>
    </location>
</feature>
<feature type="region of interest" description="Disordered" evidence="6">
    <location>
        <begin position="1"/>
        <end position="436"/>
    </location>
</feature>
<feature type="region of interest" description="Disordered" evidence="6">
    <location>
        <begin position="946"/>
        <end position="1008"/>
    </location>
</feature>
<feature type="region of interest" description="Disordered" evidence="6">
    <location>
        <begin position="1025"/>
        <end position="1051"/>
    </location>
</feature>
<feature type="coiled-coil region" evidence="2">
    <location>
        <begin position="969"/>
        <end position="1018"/>
    </location>
</feature>
<feature type="short sequence motif" description="Q motif" evidence="5">
    <location>
        <begin position="561"/>
        <end position="589"/>
    </location>
</feature>
<feature type="short sequence motif" description="DEAD box" evidence="3">
    <location>
        <begin position="718"/>
        <end position="721"/>
    </location>
</feature>
<feature type="compositionally biased region" description="Basic and acidic residues" evidence="6">
    <location>
        <begin position="22"/>
        <end position="38"/>
    </location>
</feature>
<feature type="compositionally biased region" description="Basic and acidic residues" evidence="6">
    <location>
        <begin position="46"/>
        <end position="144"/>
    </location>
</feature>
<feature type="compositionally biased region" description="Basic and acidic residues" evidence="6">
    <location>
        <begin position="185"/>
        <end position="212"/>
    </location>
</feature>
<feature type="compositionally biased region" description="Low complexity" evidence="6">
    <location>
        <begin position="236"/>
        <end position="253"/>
    </location>
</feature>
<feature type="compositionally biased region" description="Basic and acidic residues" evidence="6">
    <location>
        <begin position="326"/>
        <end position="338"/>
    </location>
</feature>
<feature type="compositionally biased region" description="Acidic residues" evidence="6">
    <location>
        <begin position="358"/>
        <end position="384"/>
    </location>
</feature>
<feature type="compositionally biased region" description="Polar residues" evidence="6">
    <location>
        <begin position="422"/>
        <end position="431"/>
    </location>
</feature>
<feature type="compositionally biased region" description="Basic and acidic residues" evidence="6">
    <location>
        <begin position="967"/>
        <end position="980"/>
    </location>
</feature>
<feature type="compositionally biased region" description="Acidic residues" evidence="6">
    <location>
        <begin position="990"/>
        <end position="1005"/>
    </location>
</feature>
<feature type="compositionally biased region" description="Basic and acidic residues" evidence="6">
    <location>
        <begin position="1025"/>
        <end position="1034"/>
    </location>
</feature>
<feature type="binding site" evidence="3">
    <location>
        <begin position="605"/>
        <end position="612"/>
    </location>
    <ligand>
        <name>ATP</name>
        <dbReference type="ChEBI" id="CHEBI:30616"/>
    </ligand>
</feature>
<dbReference type="EC" id="3.6.4.13"/>
<dbReference type="EMBL" id="DS231663">
    <property type="protein sequence ID" value="ESU06293.1"/>
    <property type="molecule type" value="Genomic_DNA"/>
</dbReference>
<dbReference type="EMBL" id="HG970332">
    <property type="protein sequence ID" value="SCB64167.1"/>
    <property type="molecule type" value="Genomic_DNA"/>
</dbReference>
<dbReference type="RefSeq" id="XP_011316778.1">
    <property type="nucleotide sequence ID" value="XM_011318476.1"/>
</dbReference>
<dbReference type="SMR" id="Q4IP34"/>
<dbReference type="FunCoup" id="Q4IP34">
    <property type="interactions" value="1043"/>
</dbReference>
<dbReference type="STRING" id="229533.Q4IP34"/>
<dbReference type="GeneID" id="23548481"/>
<dbReference type="KEGG" id="fgr:FGSG_01024"/>
<dbReference type="VEuPathDB" id="FungiDB:FGRAMPH1_01G02569"/>
<dbReference type="eggNOG" id="KOG0334">
    <property type="taxonomic scope" value="Eukaryota"/>
</dbReference>
<dbReference type="HOGENOM" id="CLU_003041_0_3_1"/>
<dbReference type="InParanoid" id="Q4IP34"/>
<dbReference type="OrthoDB" id="125653at110618"/>
<dbReference type="Proteomes" id="UP000070720">
    <property type="component" value="Chromosome 1"/>
</dbReference>
<dbReference type="GO" id="GO:0005634">
    <property type="term" value="C:nucleus"/>
    <property type="evidence" value="ECO:0007669"/>
    <property type="project" value="UniProtKB-SubCell"/>
</dbReference>
<dbReference type="GO" id="GO:0005524">
    <property type="term" value="F:ATP binding"/>
    <property type="evidence" value="ECO:0007669"/>
    <property type="project" value="UniProtKB-KW"/>
</dbReference>
<dbReference type="GO" id="GO:0016887">
    <property type="term" value="F:ATP hydrolysis activity"/>
    <property type="evidence" value="ECO:0007669"/>
    <property type="project" value="RHEA"/>
</dbReference>
<dbReference type="GO" id="GO:0003676">
    <property type="term" value="F:nucleic acid binding"/>
    <property type="evidence" value="ECO:0007669"/>
    <property type="project" value="InterPro"/>
</dbReference>
<dbReference type="GO" id="GO:0003724">
    <property type="term" value="F:RNA helicase activity"/>
    <property type="evidence" value="ECO:0007669"/>
    <property type="project" value="UniProtKB-EC"/>
</dbReference>
<dbReference type="GO" id="GO:0006397">
    <property type="term" value="P:mRNA processing"/>
    <property type="evidence" value="ECO:0007669"/>
    <property type="project" value="UniProtKB-KW"/>
</dbReference>
<dbReference type="GO" id="GO:0008380">
    <property type="term" value="P:RNA splicing"/>
    <property type="evidence" value="ECO:0007669"/>
    <property type="project" value="UniProtKB-KW"/>
</dbReference>
<dbReference type="CDD" id="cd17953">
    <property type="entry name" value="DEADc_DDX46"/>
    <property type="match status" value="1"/>
</dbReference>
<dbReference type="CDD" id="cd22474">
    <property type="entry name" value="KH-I_PRP5_like"/>
    <property type="match status" value="1"/>
</dbReference>
<dbReference type="CDD" id="cd18787">
    <property type="entry name" value="SF2_C_DEAD"/>
    <property type="match status" value="1"/>
</dbReference>
<dbReference type="FunFam" id="3.40.50.300:FF:000079">
    <property type="entry name" value="probable ATP-dependent RNA helicase DDX17"/>
    <property type="match status" value="1"/>
</dbReference>
<dbReference type="Gene3D" id="3.40.50.300">
    <property type="entry name" value="P-loop containing nucleotide triphosphate hydrolases"/>
    <property type="match status" value="2"/>
</dbReference>
<dbReference type="InterPro" id="IPR011545">
    <property type="entry name" value="DEAD/DEAH_box_helicase_dom"/>
</dbReference>
<dbReference type="InterPro" id="IPR014001">
    <property type="entry name" value="Helicase_ATP-bd"/>
</dbReference>
<dbReference type="InterPro" id="IPR001650">
    <property type="entry name" value="Helicase_C-like"/>
</dbReference>
<dbReference type="InterPro" id="IPR027417">
    <property type="entry name" value="P-loop_NTPase"/>
</dbReference>
<dbReference type="InterPro" id="IPR056149">
    <property type="entry name" value="PRP5/DDX46/KHDC4_KH"/>
</dbReference>
<dbReference type="InterPro" id="IPR000629">
    <property type="entry name" value="RNA-helicase_DEAD-box_CS"/>
</dbReference>
<dbReference type="InterPro" id="IPR014014">
    <property type="entry name" value="RNA_helicase_DEAD_Q_motif"/>
</dbReference>
<dbReference type="PANTHER" id="PTHR47958">
    <property type="entry name" value="ATP-DEPENDENT RNA HELICASE DBP3"/>
    <property type="match status" value="1"/>
</dbReference>
<dbReference type="Pfam" id="PF00270">
    <property type="entry name" value="DEAD"/>
    <property type="match status" value="1"/>
</dbReference>
<dbReference type="Pfam" id="PF00271">
    <property type="entry name" value="Helicase_C"/>
    <property type="match status" value="1"/>
</dbReference>
<dbReference type="Pfam" id="PF23469">
    <property type="entry name" value="KH_12"/>
    <property type="match status" value="1"/>
</dbReference>
<dbReference type="SMART" id="SM00487">
    <property type="entry name" value="DEXDc"/>
    <property type="match status" value="1"/>
</dbReference>
<dbReference type="SMART" id="SM00490">
    <property type="entry name" value="HELICc"/>
    <property type="match status" value="1"/>
</dbReference>
<dbReference type="SUPFAM" id="SSF52540">
    <property type="entry name" value="P-loop containing nucleoside triphosphate hydrolases"/>
    <property type="match status" value="1"/>
</dbReference>
<dbReference type="PROSITE" id="PS00039">
    <property type="entry name" value="DEAD_ATP_HELICASE"/>
    <property type="match status" value="1"/>
</dbReference>
<dbReference type="PROSITE" id="PS51192">
    <property type="entry name" value="HELICASE_ATP_BIND_1"/>
    <property type="match status" value="1"/>
</dbReference>
<dbReference type="PROSITE" id="PS51194">
    <property type="entry name" value="HELICASE_CTER"/>
    <property type="match status" value="1"/>
</dbReference>
<dbReference type="PROSITE" id="PS51195">
    <property type="entry name" value="Q_MOTIF"/>
    <property type="match status" value="1"/>
</dbReference>
<evidence type="ECO:0000250" key="1"/>
<evidence type="ECO:0000255" key="2"/>
<evidence type="ECO:0000255" key="3">
    <source>
        <dbReference type="PROSITE-ProRule" id="PRU00541"/>
    </source>
</evidence>
<evidence type="ECO:0000255" key="4">
    <source>
        <dbReference type="PROSITE-ProRule" id="PRU00542"/>
    </source>
</evidence>
<evidence type="ECO:0000255" key="5">
    <source>
        <dbReference type="PROSITE-ProRule" id="PRU00552"/>
    </source>
</evidence>
<evidence type="ECO:0000256" key="6">
    <source>
        <dbReference type="SAM" id="MobiDB-lite"/>
    </source>
</evidence>
<evidence type="ECO:0000305" key="7"/>